<organism>
    <name type="scientific">Lacticaseibacillus paracasei (strain ATCC 334 / BCRC 17002 / CCUG 31169 / CIP 107868 / KCTC 3260 / NRRL B-441)</name>
    <name type="common">Lactobacillus paracasei</name>
    <dbReference type="NCBI Taxonomy" id="321967"/>
    <lineage>
        <taxon>Bacteria</taxon>
        <taxon>Bacillati</taxon>
        <taxon>Bacillota</taxon>
        <taxon>Bacilli</taxon>
        <taxon>Lactobacillales</taxon>
        <taxon>Lactobacillaceae</taxon>
        <taxon>Lacticaseibacillus</taxon>
    </lineage>
</organism>
<accession>Q036H7</accession>
<reference key="1">
    <citation type="journal article" date="2006" name="Proc. Natl. Acad. Sci. U.S.A.">
        <title>Comparative genomics of the lactic acid bacteria.</title>
        <authorList>
            <person name="Makarova K.S."/>
            <person name="Slesarev A."/>
            <person name="Wolf Y.I."/>
            <person name="Sorokin A."/>
            <person name="Mirkin B."/>
            <person name="Koonin E.V."/>
            <person name="Pavlov A."/>
            <person name="Pavlova N."/>
            <person name="Karamychev V."/>
            <person name="Polouchine N."/>
            <person name="Shakhova V."/>
            <person name="Grigoriev I."/>
            <person name="Lou Y."/>
            <person name="Rohksar D."/>
            <person name="Lucas S."/>
            <person name="Huang K."/>
            <person name="Goodstein D.M."/>
            <person name="Hawkins T."/>
            <person name="Plengvidhya V."/>
            <person name="Welker D."/>
            <person name="Hughes J."/>
            <person name="Goh Y."/>
            <person name="Benson A."/>
            <person name="Baldwin K."/>
            <person name="Lee J.-H."/>
            <person name="Diaz-Muniz I."/>
            <person name="Dosti B."/>
            <person name="Smeianov V."/>
            <person name="Wechter W."/>
            <person name="Barabote R."/>
            <person name="Lorca G."/>
            <person name="Altermann E."/>
            <person name="Barrangou R."/>
            <person name="Ganesan B."/>
            <person name="Xie Y."/>
            <person name="Rawsthorne H."/>
            <person name="Tamir D."/>
            <person name="Parker C."/>
            <person name="Breidt F."/>
            <person name="Broadbent J.R."/>
            <person name="Hutkins R."/>
            <person name="O'Sullivan D."/>
            <person name="Steele J."/>
            <person name="Unlu G."/>
            <person name="Saier M.H. Jr."/>
            <person name="Klaenhammer T."/>
            <person name="Richardson P."/>
            <person name="Kozyavkin S."/>
            <person name="Weimer B.C."/>
            <person name="Mills D.A."/>
        </authorList>
    </citation>
    <scope>NUCLEOTIDE SEQUENCE [LARGE SCALE GENOMIC DNA]</scope>
    <source>
        <strain>ATCC 334 / BCRC 17002 / CCUG 31169 / CIP 107868 / KCTC 3260 / NRRL B-441</strain>
    </source>
</reference>
<sequence length="243" mass="27103">MYYQNVSVGQLIKRVSRFTVEIDLNGTVEPVHMNNTGRNKEILIPGSLASVRYVDNPNRKTHYDLLAVQRQGRWINIDSLAPNHVAKECLEAGTLKLPGLALPYAVHPESTWRDSRLDFAGKAADGQSWFVETKGVTLANGTLAAFPDAPTTRAVKHVHTLTMAQAEGYQAFLLFIVQLPDIRQMTIYRDRFPELVTAITTAKQNGVRVLAYDTMTGPDQITLGNEIPFDEHLPFSEINLNSL</sequence>
<feature type="chain" id="PRO_1000007992" description="Sugar fermentation stimulation protein homolog">
    <location>
        <begin position="1"/>
        <end position="243"/>
    </location>
</feature>
<keyword id="KW-1185">Reference proteome</keyword>
<dbReference type="EMBL" id="CP000423">
    <property type="protein sequence ID" value="ABJ70895.1"/>
    <property type="molecule type" value="Genomic_DNA"/>
</dbReference>
<dbReference type="RefSeq" id="WP_003571118.1">
    <property type="nucleotide sequence ID" value="NC_008526.1"/>
</dbReference>
<dbReference type="RefSeq" id="YP_807337.1">
    <property type="nucleotide sequence ID" value="NC_008526.1"/>
</dbReference>
<dbReference type="SMR" id="Q036H7"/>
<dbReference type="STRING" id="321967.LSEI_2146"/>
<dbReference type="PaxDb" id="321967-LSEI_2146"/>
<dbReference type="DNASU" id="4420693"/>
<dbReference type="GeneID" id="57090767"/>
<dbReference type="KEGG" id="lca:LSEI_2146"/>
<dbReference type="PATRIC" id="fig|321967.11.peg.2107"/>
<dbReference type="HOGENOM" id="CLU_052299_1_0_9"/>
<dbReference type="Proteomes" id="UP000001651">
    <property type="component" value="Chromosome"/>
</dbReference>
<dbReference type="GO" id="GO:0003677">
    <property type="term" value="F:DNA binding"/>
    <property type="evidence" value="ECO:0007669"/>
    <property type="project" value="InterPro"/>
</dbReference>
<dbReference type="CDD" id="cd22359">
    <property type="entry name" value="SfsA-like_bacterial"/>
    <property type="match status" value="1"/>
</dbReference>
<dbReference type="Gene3D" id="2.40.50.580">
    <property type="match status" value="1"/>
</dbReference>
<dbReference type="Gene3D" id="3.40.1350.60">
    <property type="match status" value="1"/>
</dbReference>
<dbReference type="HAMAP" id="MF_00095">
    <property type="entry name" value="SfsA"/>
    <property type="match status" value="1"/>
</dbReference>
<dbReference type="InterPro" id="IPR005224">
    <property type="entry name" value="SfsA"/>
</dbReference>
<dbReference type="InterPro" id="IPR040452">
    <property type="entry name" value="SfsA_C"/>
</dbReference>
<dbReference type="InterPro" id="IPR041465">
    <property type="entry name" value="SfsA_N"/>
</dbReference>
<dbReference type="NCBIfam" id="TIGR00230">
    <property type="entry name" value="sfsA"/>
    <property type="match status" value="1"/>
</dbReference>
<dbReference type="PANTHER" id="PTHR30545">
    <property type="entry name" value="SUGAR FERMENTATION STIMULATION PROTEIN A"/>
    <property type="match status" value="1"/>
</dbReference>
<dbReference type="PANTHER" id="PTHR30545:SF2">
    <property type="entry name" value="SUGAR FERMENTATION STIMULATION PROTEIN A"/>
    <property type="match status" value="1"/>
</dbReference>
<dbReference type="Pfam" id="PF03749">
    <property type="entry name" value="SfsA"/>
    <property type="match status" value="1"/>
</dbReference>
<dbReference type="Pfam" id="PF17746">
    <property type="entry name" value="SfsA_N"/>
    <property type="match status" value="1"/>
</dbReference>
<protein>
    <recommendedName>
        <fullName evidence="1">Sugar fermentation stimulation protein homolog</fullName>
    </recommendedName>
</protein>
<evidence type="ECO:0000255" key="1">
    <source>
        <dbReference type="HAMAP-Rule" id="MF_00095"/>
    </source>
</evidence>
<proteinExistence type="inferred from homology"/>
<gene>
    <name evidence="1" type="primary">sfsA</name>
    <name type="ordered locus">LSEI_2146</name>
</gene>
<comment type="similarity">
    <text evidence="1">Belongs to the SfsA family.</text>
</comment>
<name>SFSA_LACP3</name>